<protein>
    <recommendedName>
        <fullName evidence="7">Anthocyanidin 3-O-glucosyltransferase UFGT</fullName>
        <ecNumber evidence="2 5">2.4.1.115</ecNumber>
    </recommendedName>
    <alternativeName>
        <fullName evidence="7">Flavonol 3-O-glucosyltransferase</fullName>
        <ecNumber evidence="2 5">2.4.1.91</ecNumber>
    </alternativeName>
    <alternativeName>
        <fullName evidence="6">UDP-glucose flavonoid 3-O-glucosyltransferase</fullName>
    </alternativeName>
</protein>
<comment type="function">
    <text evidence="2 5 8 9">In the presence of other necessary color factors, this glycosylation reaction allows the accumulation of anthocyanin pigments (Probable). Involved in the formation of red wine pigments (Probable). UDP-glucose (UDP-Glc) is the physiological sugar donor, and cyanidin is the natural acceptor in vivo (PubMed:9535914). Can glucosylate the anthocyanidins delphinidin, peonidin, pelargonidin and malvidin (PubMed:9535914). The flavonols quercitin and kaempferol can also be glucosylated in vitro, but with glucosylation rates 50-100 times lower than cyanidin (PubMed:9535914). In vitro, can use UDP-Glc, UDP-5SGlc, UDP-Xyl, UDP-Man, UDP-Gal, UDP-GlcNAc, GDP-Glc, dTDP-Glc and dTDP-Xyl as sugar donors, but not UDP-6OMeGal, UDP-Ara, UDP-6FGal, UDP-GlcN, UDP-2FGal, UDP-5SAra, GDP-Man, GDP-Fuc, UDP-Fuc or UDP-Rha (PubMed:16482224).</text>
</comment>
<comment type="catalytic activity">
    <reaction evidence="2 5">
        <text>an anthocyanidin + UDP-alpha-D-glucose + H(+) = an anthocyanidin 3-O-beta-D-glucoside + UDP</text>
        <dbReference type="Rhea" id="RHEA:20093"/>
        <dbReference type="ChEBI" id="CHEBI:15378"/>
        <dbReference type="ChEBI" id="CHEBI:16307"/>
        <dbReference type="ChEBI" id="CHEBI:58223"/>
        <dbReference type="ChEBI" id="CHEBI:58885"/>
        <dbReference type="ChEBI" id="CHEBI:143576"/>
        <dbReference type="EC" id="2.4.1.115"/>
    </reaction>
    <physiologicalReaction direction="left-to-right" evidence="2 5">
        <dbReference type="Rhea" id="RHEA:20094"/>
    </physiologicalReaction>
</comment>
<comment type="catalytic activity">
    <reaction evidence="2 5">
        <text>cyanidin + UDP-alpha-D-glucose = cyanidin 3-O-beta-D-glucoside + UDP + H(+)</text>
        <dbReference type="Rhea" id="RHEA:60100"/>
        <dbReference type="ChEBI" id="CHEBI:15378"/>
        <dbReference type="ChEBI" id="CHEBI:58223"/>
        <dbReference type="ChEBI" id="CHEBI:58885"/>
        <dbReference type="ChEBI" id="CHEBI:71682"/>
        <dbReference type="ChEBI" id="CHEBI:77857"/>
        <dbReference type="EC" id="2.4.1.115"/>
    </reaction>
    <physiologicalReaction direction="left-to-right" evidence="2 5">
        <dbReference type="Rhea" id="RHEA:60101"/>
    </physiologicalReaction>
</comment>
<comment type="catalytic activity">
    <reaction evidence="5">
        <text>delphinidin + UDP-alpha-D-glucose = delphinidin 3-O-beta-D-glucoside + UDP</text>
        <dbReference type="Rhea" id="RHEA:61500"/>
        <dbReference type="ChEBI" id="CHEBI:58223"/>
        <dbReference type="ChEBI" id="CHEBI:58885"/>
        <dbReference type="ChEBI" id="CHEBI:144775"/>
        <dbReference type="ChEBI" id="CHEBI:144776"/>
        <dbReference type="EC" id="2.4.1.115"/>
    </reaction>
    <physiologicalReaction direction="left-to-right" evidence="5">
        <dbReference type="Rhea" id="RHEA:61501"/>
    </physiologicalReaction>
</comment>
<comment type="catalytic activity">
    <reaction evidence="5">
        <text>peonidin + UDP-alpha-D-glucose = peonidin 3-O-beta-D-glucoside + UDP</text>
        <dbReference type="Rhea" id="RHEA:61508"/>
        <dbReference type="ChEBI" id="CHEBI:58223"/>
        <dbReference type="ChEBI" id="CHEBI:58885"/>
        <dbReference type="ChEBI" id="CHEBI:144779"/>
        <dbReference type="ChEBI" id="CHEBI:144780"/>
        <dbReference type="EC" id="2.4.1.115"/>
    </reaction>
    <physiologicalReaction direction="left-to-right" evidence="5">
        <dbReference type="Rhea" id="RHEA:61509"/>
    </physiologicalReaction>
</comment>
<comment type="catalytic activity">
    <reaction evidence="5">
        <text>pelargonidin + UDP-alpha-D-glucose = pelargonidin 3-O-beta-D-glucoside + UDP</text>
        <dbReference type="Rhea" id="RHEA:61504"/>
        <dbReference type="ChEBI" id="CHEBI:58223"/>
        <dbReference type="ChEBI" id="CHEBI:58885"/>
        <dbReference type="ChEBI" id="CHEBI:144777"/>
        <dbReference type="ChEBI" id="CHEBI:144778"/>
        <dbReference type="EC" id="2.4.1.115"/>
    </reaction>
    <physiologicalReaction direction="left-to-right" evidence="5">
        <dbReference type="Rhea" id="RHEA:61505"/>
    </physiologicalReaction>
</comment>
<comment type="catalytic activity">
    <reaction evidence="5">
        <text>malvidin + UDP-alpha-D-glucose = malvidin 3-O-beta-D-glucoside + UDP</text>
        <dbReference type="Rhea" id="RHEA:61512"/>
        <dbReference type="ChEBI" id="CHEBI:58223"/>
        <dbReference type="ChEBI" id="CHEBI:58885"/>
        <dbReference type="ChEBI" id="CHEBI:144781"/>
        <dbReference type="ChEBI" id="CHEBI:144782"/>
    </reaction>
    <physiologicalReaction direction="left-to-right" evidence="5">
        <dbReference type="Rhea" id="RHEA:61513"/>
    </physiologicalReaction>
</comment>
<comment type="catalytic activity">
    <reaction evidence="2 5">
        <text>a flavonol + UDP-alpha-D-glucose = a flavonol 3-O-beta-D-glucoside + UDP + H(+)</text>
        <dbReference type="Rhea" id="RHEA:22300"/>
        <dbReference type="ChEBI" id="CHEBI:15378"/>
        <dbReference type="ChEBI" id="CHEBI:16816"/>
        <dbReference type="ChEBI" id="CHEBI:28802"/>
        <dbReference type="ChEBI" id="CHEBI:58223"/>
        <dbReference type="ChEBI" id="CHEBI:58885"/>
        <dbReference type="EC" id="2.4.1.91"/>
    </reaction>
    <physiologicalReaction direction="right-to-left" evidence="2 5">
        <dbReference type="Rhea" id="RHEA:22302"/>
    </physiologicalReaction>
</comment>
<comment type="activity regulation">
    <text evidence="5">Inhibited by Mn(2+) and Zn(2+).</text>
</comment>
<comment type="biophysicochemical properties">
    <kinetics>
        <KM evidence="5">1.9 mM for UDP-Glc (in the presence of quercitin)</KM>
        <KM evidence="2">679 uM for UDP-Glc (in the presence of 100 uM quercitin)</KM>
        <KM evidence="2">300 uM for dTDP-Glc (in the presence of 100 uM quercitin)</KM>
        <KM evidence="2">166 uM for UDP-5SGlc (in the presence of 100 uM quercitin)</KM>
        <KM evidence="2">194 uM for UDP-GlcNAc (in the presence of 100 uM quercitin)</KM>
        <KM evidence="2">48.2 uM for UDP-Gal (in the presence of 100 uM quercitin)</KM>
        <KM evidence="2">50.1 uM for UDP-Man (in the presence of 100 uM quercitin)</KM>
        <KM evidence="2">167 uM for GDP-Glc (in the presence of 100 uM quercitin)</KM>
        <KM evidence="2">166 uM for dTDP-Xyl (in the presence of 100 uM quercitin)</KM>
        <KM evidence="2">219 uM for UDP-Xyl (in the presence of 100 uM quercitin)</KM>
        <KM evidence="5">15 uM for quercitin (in the presence of UDP-Glc)</KM>
        <KM evidence="2">30.8 uM for quercitin (in the presence of UDP-Glc)</KM>
        <KM evidence="2">42.3 uM for kaempferol (in the presence of UDP-Glc)</KM>
        <KM evidence="5">30 uM for cyanidin (in the presence of UDP-Glc)</KM>
        <KM evidence="5">16 uM for delphinidin (in the presence of UDP-Glc)</KM>
        <KM evidence="5">35.7 uM for malvidin (in the presence of UDP-Glc)</KM>
        <Vmax evidence="5">18.9 nmol/sec/mg enzyme with quercitin as substrate</Vmax>
        <Vmax evidence="5">905.0 nmol/sec/mg enzyme with cyanidin as substrate</Vmax>
    </kinetics>
    <phDependence>
        <text evidence="2 5">Optimum pH is 8.0.</text>
    </phDependence>
</comment>
<comment type="pathway">
    <text>Pigment biosynthesis; anthocyanin biosynthesis.</text>
</comment>
<comment type="tissue specificity">
    <text evidence="4">Detected only in berry skin.</text>
</comment>
<comment type="induction">
    <text evidence="3">By light.</text>
</comment>
<comment type="miscellaneous">
    <text>The expression of UFGT is not detected in white grapes.</text>
</comment>
<comment type="similarity">
    <text evidence="7">Belongs to the UDP-glycosyltransferase family.</text>
</comment>
<comment type="sequence caution" evidence="7">
    <conflict type="frameshift">
        <sequence resource="EMBL-CDS" id="CAA53582"/>
    </conflict>
</comment>
<gene>
    <name evidence="6" type="primary">UFGT</name>
    <name type="synonym">AlUFGT1</name>
    <name type="synonym">AlUFGT2</name>
    <name type="synonym">FlUFGT1</name>
    <name type="synonym">FlUFGT2</name>
    <name type="synonym">ITUFGT1</name>
    <name type="synonym">ITUFGT2</name>
    <name type="synonym">RUUFGT1</name>
    <name type="synonym">RUUFGT2</name>
    <name type="synonym">VVGT1</name>
    <name type="ORF">GSVIVT00014047001</name>
    <name type="ORF">LOC100233099</name>
    <name type="ORF">VITISV_008354</name>
</gene>
<accession>P51094</accession>
<accession>A5BVQ6</accession>
<accession>A7PBD4</accession>
<accession>O22303</accession>
<accession>O22304</accession>
<accession>Q1G141</accession>
<accession>Q9AQV0</accession>
<accession>Q9AR43</accession>
<accession>Q9AR45</accession>
<keyword id="KW-0002">3D-structure</keyword>
<keyword id="KW-0328">Glycosyltransferase</keyword>
<keyword id="KW-0808">Transferase</keyword>
<organism>
    <name type="scientific">Vitis vinifera</name>
    <name type="common">Grape</name>
    <dbReference type="NCBI Taxonomy" id="29760"/>
    <lineage>
        <taxon>Eukaryota</taxon>
        <taxon>Viridiplantae</taxon>
        <taxon>Streptophyta</taxon>
        <taxon>Embryophyta</taxon>
        <taxon>Tracheophyta</taxon>
        <taxon>Spermatophyta</taxon>
        <taxon>Magnoliopsida</taxon>
        <taxon>eudicotyledons</taxon>
        <taxon>Gunneridae</taxon>
        <taxon>Pentapetalae</taxon>
        <taxon>rosids</taxon>
        <taxon>Vitales</taxon>
        <taxon>Vitaceae</taxon>
        <taxon>Viteae</taxon>
        <taxon>Vitis</taxon>
    </lineage>
</organism>
<reference key="1">
    <citation type="journal article" date="1998" name="J. Biol. Chem.">
        <title>Cloning and characterization of Vitis vinifera UDP-glucose:flavonoid 3-O-glucosyltransferase, a homologue of the enzyme encoded by the maize Bronze-1 locus that may primarily serve to glucosylate anthocyanidins in vivo.</title>
        <authorList>
            <person name="Ford C.M."/>
            <person name="Boss P.K."/>
            <person name="Hoj P.B."/>
        </authorList>
    </citation>
    <scope>NUCLEOTIDE SEQUENCE [MRNA]</scope>
    <scope>FUNCTION</scope>
    <scope>CATALYTIC ACTIVITY</scope>
    <scope>ACTIVITY REGULATION</scope>
    <scope>BIOPHYSICOCHEMICAL PROPERTIES</scope>
    <scope>VARIANT VAL-134</scope>
    <source>
        <strain>cv. Shiraz</strain>
        <tissue>Fruit</tissue>
    </source>
</reference>
<reference key="2">
    <citation type="journal article" date="2001" name="Plant Sci.">
        <title>Comparison of UDP-glucose:flavonoid 3-O-glucosyltransferase (UFGT) gene sequences between white grapes (Vitis vinifera) and their sports with red skin.</title>
        <authorList>
            <person name="Kobayashi S."/>
            <person name="Ishimaru M."/>
            <person name="Ding C.K."/>
            <person name="Yakushiji H."/>
            <person name="Goto N."/>
        </authorList>
    </citation>
    <scope>NUCLEOTIDE SEQUENCE [GENOMIC DNA]</scope>
    <source>
        <strain>cv. Flame Muscat</strain>
        <strain>cv. Italia</strain>
        <strain>cv. Muscat of Alexandria</strain>
        <strain>cv. Ruby Okuyama</strain>
    </source>
</reference>
<reference key="3">
    <citation type="submission" date="2006-04" db="EMBL/GenBank/DDBJ databases">
        <title>Molecular cloning of UDP-glucose:flavonoid 3-O-glucosyltransferase (UFGT) gene from Vitis vinifera Red Globe.</title>
        <authorList>
            <person name="Cheng J.H."/>
            <person name="Wu J."/>
            <person name="Yang F.C."/>
        </authorList>
    </citation>
    <scope>NUCLEOTIDE SEQUENCE [GENOMIC DNA]</scope>
    <source>
        <strain>cv. Red Globe</strain>
    </source>
</reference>
<reference key="4">
    <citation type="journal article" date="2007" name="Nature">
        <title>The grapevine genome sequence suggests ancestral hexaploidization in major angiosperm phyla.</title>
        <authorList>
            <person name="Jaillon O."/>
            <person name="Aury J.-M."/>
            <person name="Noel B."/>
            <person name="Policriti A."/>
            <person name="Clepet C."/>
            <person name="Casagrande A."/>
            <person name="Choisne N."/>
            <person name="Aubourg S."/>
            <person name="Vitulo N."/>
            <person name="Jubin C."/>
            <person name="Vezzi A."/>
            <person name="Legeai F."/>
            <person name="Hugueney P."/>
            <person name="Dasilva C."/>
            <person name="Horner D."/>
            <person name="Mica E."/>
            <person name="Jublot D."/>
            <person name="Poulain J."/>
            <person name="Bruyere C."/>
            <person name="Billault A."/>
            <person name="Segurens B."/>
            <person name="Gouyvenoux M."/>
            <person name="Ugarte E."/>
            <person name="Cattonaro F."/>
            <person name="Anthouard V."/>
            <person name="Vico V."/>
            <person name="Del Fabbro C."/>
            <person name="Alaux M."/>
            <person name="Di Gaspero G."/>
            <person name="Dumas V."/>
            <person name="Felice N."/>
            <person name="Paillard S."/>
            <person name="Juman I."/>
            <person name="Moroldo M."/>
            <person name="Scalabrin S."/>
            <person name="Canaguier A."/>
            <person name="Le Clainche I."/>
            <person name="Malacrida G."/>
            <person name="Durand E."/>
            <person name="Pesole G."/>
            <person name="Laucou V."/>
            <person name="Chatelet P."/>
            <person name="Merdinoglu D."/>
            <person name="Delledonne M."/>
            <person name="Pezzotti M."/>
            <person name="Lecharny A."/>
            <person name="Scarpelli C."/>
            <person name="Artiguenave F."/>
            <person name="Pe M.E."/>
            <person name="Valle G."/>
            <person name="Morgante M."/>
            <person name="Caboche M."/>
            <person name="Adam-Blondon A.-F."/>
            <person name="Weissenbach J."/>
            <person name="Quetier F."/>
            <person name="Wincker P."/>
        </authorList>
    </citation>
    <scope>NUCLEOTIDE SEQUENCE [LARGE SCALE GENOMIC DNA]</scope>
    <source>
        <strain>cv. Pinot noir / PN40024</strain>
    </source>
</reference>
<reference key="5">
    <citation type="journal article" date="2007" name="PLoS ONE">
        <title>A high quality draft consensus sequence of the genome of a heterozygous grapevine variety.</title>
        <authorList>
            <person name="Velasco R."/>
            <person name="Zharkikh A."/>
            <person name="Troggio M."/>
            <person name="Cartwright D.A."/>
            <person name="Cestaro A."/>
            <person name="Pruss D."/>
            <person name="Pindo M."/>
            <person name="FitzGerald L.M."/>
            <person name="Vezzulli S."/>
            <person name="Reid J."/>
            <person name="Malacarne G."/>
            <person name="Iliev D."/>
            <person name="Coppola G."/>
            <person name="Wardell B."/>
            <person name="Micheletti D."/>
            <person name="Macalma T."/>
            <person name="Facci M."/>
            <person name="Mitchell J.T."/>
            <person name="Perazzolli M."/>
            <person name="Eldredge G."/>
            <person name="Gatto P."/>
            <person name="Oyzerski R."/>
            <person name="Moretto M."/>
            <person name="Gutin N."/>
            <person name="Stefanini M."/>
            <person name="Chen Y."/>
            <person name="Segala C."/>
            <person name="Davenport C."/>
            <person name="Dematte L."/>
            <person name="Mraz A."/>
            <person name="Battilana J."/>
            <person name="Stormo K."/>
            <person name="Costa F."/>
            <person name="Tao Q."/>
            <person name="Si-Ammour A."/>
            <person name="Harkins T."/>
            <person name="Lackey A."/>
            <person name="Perbost C."/>
            <person name="Taillon B."/>
            <person name="Stella A."/>
            <person name="Solovyev V."/>
            <person name="Fawcett J.A."/>
            <person name="Sterck L."/>
            <person name="Vandepoele K."/>
            <person name="Grando S.M."/>
            <person name="Toppo S."/>
            <person name="Moser C."/>
            <person name="Lanchbury J."/>
            <person name="Bogden R."/>
            <person name="Skolnick M."/>
            <person name="Sgaramella V."/>
            <person name="Bhatnagar S.K."/>
            <person name="Fontana P."/>
            <person name="Gutin A."/>
            <person name="Van de Peer Y."/>
            <person name="Salamini F."/>
            <person name="Viola R."/>
        </authorList>
    </citation>
    <scope>NUCLEOTIDE SEQUENCE [LARGE SCALE GENOMIC DNA]</scope>
    <source>
        <strain>cv. Pinot noir</strain>
    </source>
</reference>
<reference key="6">
    <citation type="journal article" date="1994" name="Plant Mol. Biol.">
        <title>Cloning and molecular analysis of structural genes involved in flavonoid and stilbene biosynthesis in grape (Vitis vinifera L.).</title>
        <authorList>
            <person name="Sparvoli F."/>
            <person name="Martin C."/>
            <person name="Scienza A."/>
            <person name="Gavazzi G."/>
            <person name="Tonelli C."/>
        </authorList>
    </citation>
    <scope>NUCLEOTIDE SEQUENCE [MRNA] OF 303-456</scope>
    <scope>INDUCTION</scope>
    <source>
        <strain>cv. Lambrusco Foglia Frastagliata</strain>
    </source>
</reference>
<reference key="7">
    <citation type="journal article" date="1996" name="Plant Mol. Biol.">
        <title>Expression of anthocyanin biosynthesis pathway genes in red and white grapes.</title>
        <authorList>
            <person name="Boss P.K."/>
            <person name="Davies C."/>
            <person name="Robinson S.P."/>
        </authorList>
    </citation>
    <scope>TISSUE SPECIFICITY</scope>
</reference>
<reference key="8">
    <citation type="journal article" date="2006" name="EMBO J.">
        <title>Structure of a flavonoid glucosyltransferase reveals the basis for plant natural product modification.</title>
        <authorList>
            <person name="Offen W."/>
            <person name="Martinez-Fleites C."/>
            <person name="Yang M."/>
            <person name="Kiat-Lim E."/>
            <person name="Davis B.G."/>
            <person name="Tarling C.A."/>
            <person name="Ford C.M."/>
            <person name="Bowles D.J."/>
            <person name="Davies G.J."/>
        </authorList>
    </citation>
    <scope>X-RAY CRYSTALLOGRAPHY (1.9 ANGSTROMS) IN COMPLEX WITH UDP-GLUCOSE ANOLOG AND KAEMPFEROL OR IN COMPLEX WITH UDP AND QUERCETIN</scope>
    <scope>CATALYTIC ACTIVITY</scope>
    <scope>BIOPHYSICOCHEMICAL PROPERTIES</scope>
    <scope>MUTAGENESIS OF HIS-20; THR-141; ASP-374 AND GLN-375</scope>
</reference>
<sequence length="456" mass="50150">MSQTTTNPHVAVLAFPFSTHAAPLLAVVRRLAAAAPHAVFSFFSTSQSNASIFHDSMHTMQCNIKSYDISDGVPEGYVFAGRPQEDIELFTRAAPESFRQGMVMAVAETGRPVSCLVADAFIWFAADMAAEMGLAWLPFWTAGPNSLSTHVYIDEIREKIGVSGIQGREDELLNFIPGMSKVRFRDLQEGIVFGNLNSLFSRMLHRMGQVLPKATAVFINSFEELDDSLTNDLKSKLKTYLNIGPFNLITPPPVVPNTTGCLQWLKERKPTSVVYISFGTVTTPPPAEVVALSEALEASRVPFIWSLRDKARVHLPEGFLEKTRGYGMVVPWAPQAEVLAHEAVGAFVTHCGWNSLWESVAGGVPLICRPFFGDQRLNGRMVEDVLEIGVRIEGGVFTKSGLMSCFDQILSQEKGKKLRENLRALRETADRAVGPKGSSTENFITLVDLVSKPKDV</sequence>
<dbReference type="EC" id="2.4.1.115" evidence="2 5"/>
<dbReference type="EC" id="2.4.1.91" evidence="2 5"/>
<dbReference type="EMBL" id="AF000371">
    <property type="protein sequence ID" value="AAB81682.1"/>
    <property type="molecule type" value="mRNA"/>
</dbReference>
<dbReference type="EMBL" id="AF000372">
    <property type="protein sequence ID" value="AAB81683.1"/>
    <property type="molecule type" value="mRNA"/>
</dbReference>
<dbReference type="EMBL" id="AB047092">
    <property type="protein sequence ID" value="BAB41019.1"/>
    <property type="molecule type" value="Genomic_DNA"/>
</dbReference>
<dbReference type="EMBL" id="AB047093">
    <property type="protein sequence ID" value="BAB41020.1"/>
    <property type="molecule type" value="Genomic_DNA"/>
</dbReference>
<dbReference type="EMBL" id="AB047094">
    <property type="protein sequence ID" value="BAB41021.1"/>
    <property type="molecule type" value="Genomic_DNA"/>
</dbReference>
<dbReference type="EMBL" id="AB047095">
    <property type="protein sequence ID" value="BAB41022.1"/>
    <property type="molecule type" value="Genomic_DNA"/>
</dbReference>
<dbReference type="EMBL" id="AB047096">
    <property type="protein sequence ID" value="BAB41023.1"/>
    <property type="molecule type" value="Genomic_DNA"/>
</dbReference>
<dbReference type="EMBL" id="AB047097">
    <property type="protein sequence ID" value="BAB41024.1"/>
    <property type="molecule type" value="Genomic_DNA"/>
</dbReference>
<dbReference type="EMBL" id="AB047098">
    <property type="protein sequence ID" value="BAB41025.1"/>
    <property type="molecule type" value="Genomic_DNA"/>
</dbReference>
<dbReference type="EMBL" id="AB047099">
    <property type="protein sequence ID" value="BAB41026.1"/>
    <property type="molecule type" value="Genomic_DNA"/>
</dbReference>
<dbReference type="EMBL" id="DQ513314">
    <property type="protein sequence ID" value="ABF59818.1"/>
    <property type="molecule type" value="Genomic_DNA"/>
</dbReference>
<dbReference type="EMBL" id="AM472935">
    <property type="protein sequence ID" value="CAN61846.1"/>
    <property type="molecule type" value="Genomic_DNA"/>
</dbReference>
<dbReference type="EMBL" id="X75968">
    <property type="protein sequence ID" value="CAA53582.1"/>
    <property type="status" value="ALT_FRAME"/>
    <property type="molecule type" value="mRNA"/>
</dbReference>
<dbReference type="PDB" id="2C1X">
    <property type="method" value="X-ray"/>
    <property type="resolution" value="1.90 A"/>
    <property type="chains" value="A=1-456"/>
</dbReference>
<dbReference type="PDB" id="2C1Z">
    <property type="method" value="X-ray"/>
    <property type="resolution" value="1.90 A"/>
    <property type="chains" value="A=1-456"/>
</dbReference>
<dbReference type="PDB" id="2C9Z">
    <property type="method" value="X-ray"/>
    <property type="resolution" value="2.10 A"/>
    <property type="chains" value="A=1-456"/>
</dbReference>
<dbReference type="PDBsum" id="2C1X"/>
<dbReference type="PDBsum" id="2C1Z"/>
<dbReference type="PDBsum" id="2C9Z"/>
<dbReference type="SMR" id="P51094"/>
<dbReference type="CAZy" id="GT1">
    <property type="family name" value="Glycosyltransferase Family 1"/>
</dbReference>
<dbReference type="PaxDb" id="29760-VIT_16s0039g02230.t01"/>
<dbReference type="eggNOG" id="KOG1192">
    <property type="taxonomic scope" value="Eukaryota"/>
</dbReference>
<dbReference type="BRENDA" id="2.4.1.115">
    <property type="organism ID" value="6671"/>
</dbReference>
<dbReference type="UniPathway" id="UPA00009"/>
<dbReference type="EvolutionaryTrace" id="P51094"/>
<dbReference type="ExpressionAtlas" id="P51094">
    <property type="expression patterns" value="baseline and differential"/>
</dbReference>
<dbReference type="GO" id="GO:0047213">
    <property type="term" value="F:anthocyanidin 3-O-glucosyltransferase activity"/>
    <property type="evidence" value="ECO:0000314"/>
    <property type="project" value="UniProtKB"/>
</dbReference>
<dbReference type="GO" id="GO:0047893">
    <property type="term" value="F:flavonol 3-O-glucosyltransferase activity"/>
    <property type="evidence" value="ECO:0007669"/>
    <property type="project" value="UniProtKB-EC"/>
</dbReference>
<dbReference type="GO" id="GO:0009718">
    <property type="term" value="P:anthocyanin-containing compound biosynthetic process"/>
    <property type="evidence" value="ECO:0000314"/>
    <property type="project" value="UniProtKB"/>
</dbReference>
<dbReference type="GO" id="GO:0033485">
    <property type="term" value="P:cyanidin 3-O-glucoside biosynthetic process"/>
    <property type="evidence" value="ECO:0000314"/>
    <property type="project" value="UniProtKB"/>
</dbReference>
<dbReference type="GO" id="GO:0033303">
    <property type="term" value="P:quercetin O-glucoside biosynthetic process"/>
    <property type="evidence" value="ECO:0000314"/>
    <property type="project" value="UniProtKB"/>
</dbReference>
<dbReference type="CDD" id="cd03784">
    <property type="entry name" value="GT1_Gtf-like"/>
    <property type="match status" value="1"/>
</dbReference>
<dbReference type="FunFam" id="3.40.50.2000:FF:000091">
    <property type="entry name" value="Glycosyltransferase"/>
    <property type="match status" value="1"/>
</dbReference>
<dbReference type="FunFam" id="3.40.50.2000:FF:000129">
    <property type="entry name" value="Glycosyltransferase"/>
    <property type="match status" value="1"/>
</dbReference>
<dbReference type="Gene3D" id="3.40.50.2000">
    <property type="entry name" value="Glycogen Phosphorylase B"/>
    <property type="match status" value="2"/>
</dbReference>
<dbReference type="InterPro" id="IPR002213">
    <property type="entry name" value="UDP_glucos_trans"/>
</dbReference>
<dbReference type="InterPro" id="IPR035595">
    <property type="entry name" value="UDP_glycos_trans_CS"/>
</dbReference>
<dbReference type="PANTHER" id="PTHR11926">
    <property type="entry name" value="GLUCOSYL/GLUCURONOSYL TRANSFERASES"/>
    <property type="match status" value="1"/>
</dbReference>
<dbReference type="PANTHER" id="PTHR11926:SF1560">
    <property type="entry name" value="UDP-GLYCOSYLTRANSFERASE 74E1-RELATED"/>
    <property type="match status" value="1"/>
</dbReference>
<dbReference type="Pfam" id="PF00201">
    <property type="entry name" value="UDPGT"/>
    <property type="match status" value="1"/>
</dbReference>
<dbReference type="SUPFAM" id="SSF53756">
    <property type="entry name" value="UDP-Glycosyltransferase/glycogen phosphorylase"/>
    <property type="match status" value="1"/>
</dbReference>
<dbReference type="PROSITE" id="PS00375">
    <property type="entry name" value="UDPGT"/>
    <property type="match status" value="1"/>
</dbReference>
<proteinExistence type="evidence at protein level"/>
<evidence type="ECO:0000250" key="1">
    <source>
        <dbReference type="UniProtKB" id="A0A0A1HA03"/>
    </source>
</evidence>
<evidence type="ECO:0000269" key="2">
    <source>
    </source>
</evidence>
<evidence type="ECO:0000269" key="3">
    <source>
    </source>
</evidence>
<evidence type="ECO:0000269" key="4">
    <source>
    </source>
</evidence>
<evidence type="ECO:0000269" key="5">
    <source>
    </source>
</evidence>
<evidence type="ECO:0000303" key="6">
    <source>
    </source>
</evidence>
<evidence type="ECO:0000305" key="7"/>
<evidence type="ECO:0000305" key="8">
    <source>
    </source>
</evidence>
<evidence type="ECO:0000305" key="9">
    <source>
    </source>
</evidence>
<evidence type="ECO:0007744" key="10">
    <source>
        <dbReference type="PDB" id="2C1X"/>
    </source>
</evidence>
<evidence type="ECO:0007744" key="11">
    <source>
        <dbReference type="PDB" id="2C1Z"/>
    </source>
</evidence>
<evidence type="ECO:0007744" key="12">
    <source>
        <dbReference type="PDB" id="2C9Z"/>
    </source>
</evidence>
<evidence type="ECO:0007829" key="13">
    <source>
        <dbReference type="PDB" id="2C1X"/>
    </source>
</evidence>
<feature type="chain" id="PRO_0000074151" description="Anthocyanidin 3-O-glucosyltransferase UFGT">
    <location>
        <begin position="1"/>
        <end position="456"/>
    </location>
</feature>
<feature type="active site" description="Proton acceptor" evidence="1">
    <location>
        <position position="20"/>
    </location>
</feature>
<feature type="active site" description="Charge relay" evidence="1">
    <location>
        <position position="119"/>
    </location>
</feature>
<feature type="binding site" evidence="2 11">
    <location>
        <position position="18"/>
    </location>
    <ligand>
        <name>kaempferol</name>
        <dbReference type="ChEBI" id="CHEBI:58573"/>
    </ligand>
</feature>
<feature type="binding site" evidence="2 12">
    <location>
        <position position="18"/>
    </location>
    <ligand>
        <name>quercetin</name>
        <dbReference type="ChEBI" id="CHEBI:57694"/>
    </ligand>
</feature>
<feature type="binding site" evidence="2 10 12">
    <location>
        <position position="19"/>
    </location>
    <ligand>
        <name>UDP</name>
        <dbReference type="ChEBI" id="CHEBI:58223"/>
    </ligand>
</feature>
<feature type="binding site" evidence="8 11">
    <location>
        <position position="19"/>
    </location>
    <ligand>
        <name>UDP-alpha-D-glucose</name>
        <dbReference type="ChEBI" id="CHEBI:58885"/>
    </ligand>
</feature>
<feature type="binding site" evidence="2 11">
    <location>
        <position position="20"/>
    </location>
    <ligand>
        <name>kaempferol</name>
        <dbReference type="ChEBI" id="CHEBI:58573"/>
    </ligand>
</feature>
<feature type="binding site" evidence="2 11">
    <location>
        <position position="84"/>
    </location>
    <ligand>
        <name>kaempferol</name>
        <dbReference type="ChEBI" id="CHEBI:58573"/>
    </ligand>
</feature>
<feature type="binding site" evidence="2 12">
    <location>
        <position position="84"/>
    </location>
    <ligand>
        <name>quercetin</name>
        <dbReference type="ChEBI" id="CHEBI:57694"/>
    </ligand>
</feature>
<feature type="binding site" evidence="8 11">
    <location>
        <position position="141"/>
    </location>
    <ligand>
        <name>UDP-alpha-D-glucose</name>
        <dbReference type="ChEBI" id="CHEBI:58885"/>
    </ligand>
</feature>
<feature type="binding site" evidence="2 11">
    <location>
        <position position="150"/>
    </location>
    <ligand>
        <name>kaempferol</name>
        <dbReference type="ChEBI" id="CHEBI:58573"/>
    </ligand>
</feature>
<feature type="binding site" evidence="2 12">
    <location>
        <position position="150"/>
    </location>
    <ligand>
        <name>quercetin</name>
        <dbReference type="ChEBI" id="CHEBI:57694"/>
    </ligand>
</feature>
<feature type="binding site" evidence="2 11">
    <location>
        <position position="188"/>
    </location>
    <ligand>
        <name>kaempferol</name>
        <dbReference type="ChEBI" id="CHEBI:58573"/>
    </ligand>
</feature>
<feature type="binding site" evidence="2 12">
    <location>
        <position position="188"/>
    </location>
    <ligand>
        <name>quercetin</name>
        <dbReference type="ChEBI" id="CHEBI:57694"/>
    </ligand>
</feature>
<feature type="binding site" evidence="2 10 12">
    <location>
        <position position="280"/>
    </location>
    <ligand>
        <name>UDP</name>
        <dbReference type="ChEBI" id="CHEBI:58223"/>
    </ligand>
</feature>
<feature type="binding site" evidence="8 11">
    <location>
        <position position="280"/>
    </location>
    <ligand>
        <name>UDP-alpha-D-glucose</name>
        <dbReference type="ChEBI" id="CHEBI:58885"/>
    </ligand>
</feature>
<feature type="binding site" evidence="2 10 12">
    <location>
        <position position="306"/>
    </location>
    <ligand>
        <name>UDP</name>
        <dbReference type="ChEBI" id="CHEBI:58223"/>
    </ligand>
</feature>
<feature type="binding site" evidence="8 11">
    <location>
        <position position="306"/>
    </location>
    <ligand>
        <name>UDP-alpha-D-glucose</name>
        <dbReference type="ChEBI" id="CHEBI:58885"/>
    </ligand>
</feature>
<feature type="binding site" evidence="2 10 12">
    <location>
        <position position="332"/>
    </location>
    <ligand>
        <name>UDP</name>
        <dbReference type="ChEBI" id="CHEBI:58223"/>
    </ligand>
</feature>
<feature type="binding site" evidence="8 11">
    <location>
        <position position="332"/>
    </location>
    <ligand>
        <name>UDP-alpha-D-glucose</name>
        <dbReference type="ChEBI" id="CHEBI:58885"/>
    </ligand>
</feature>
<feature type="binding site" evidence="2 10 12">
    <location>
        <position position="333"/>
    </location>
    <ligand>
        <name>UDP</name>
        <dbReference type="ChEBI" id="CHEBI:58223"/>
    </ligand>
</feature>
<feature type="binding site" evidence="8 11">
    <location>
        <position position="333"/>
    </location>
    <ligand>
        <name>UDP-alpha-D-glucose</name>
        <dbReference type="ChEBI" id="CHEBI:58885"/>
    </ligand>
</feature>
<feature type="binding site" evidence="2 10 12">
    <location>
        <position position="350"/>
    </location>
    <ligand>
        <name>UDP</name>
        <dbReference type="ChEBI" id="CHEBI:58223"/>
    </ligand>
</feature>
<feature type="binding site" evidence="8 11">
    <location>
        <position position="350"/>
    </location>
    <ligand>
        <name>UDP-alpha-D-glucose</name>
        <dbReference type="ChEBI" id="CHEBI:58885"/>
    </ligand>
</feature>
<feature type="binding site" evidence="8 11">
    <location>
        <position position="353"/>
    </location>
    <ligand>
        <name>UDP-alpha-D-glucose</name>
        <dbReference type="ChEBI" id="CHEBI:58885"/>
    </ligand>
</feature>
<feature type="binding site" evidence="2 10 12">
    <location>
        <position position="354"/>
    </location>
    <ligand>
        <name>UDP</name>
        <dbReference type="ChEBI" id="CHEBI:58223"/>
    </ligand>
</feature>
<feature type="binding site" evidence="8 11">
    <location>
        <position position="354"/>
    </location>
    <ligand>
        <name>UDP-alpha-D-glucose</name>
        <dbReference type="ChEBI" id="CHEBI:58885"/>
    </ligand>
</feature>
<feature type="binding site" evidence="2 10 12">
    <location>
        <position position="355"/>
    </location>
    <ligand>
        <name>UDP</name>
        <dbReference type="ChEBI" id="CHEBI:58223"/>
    </ligand>
</feature>
<feature type="binding site" evidence="8 11">
    <location>
        <position position="355"/>
    </location>
    <ligand>
        <name>UDP-alpha-D-glucose</name>
        <dbReference type="ChEBI" id="CHEBI:58885"/>
    </ligand>
</feature>
<feature type="binding site" evidence="2 10 12">
    <location>
        <position position="358"/>
    </location>
    <ligand>
        <name>UDP</name>
        <dbReference type="ChEBI" id="CHEBI:58223"/>
    </ligand>
</feature>
<feature type="binding site" evidence="8 11">
    <location>
        <position position="358"/>
    </location>
    <ligand>
        <name>UDP-alpha-D-glucose</name>
        <dbReference type="ChEBI" id="CHEBI:58885"/>
    </ligand>
</feature>
<feature type="binding site" evidence="2 12">
    <location>
        <position position="373"/>
    </location>
    <ligand>
        <name>quercetin</name>
        <dbReference type="ChEBI" id="CHEBI:57694"/>
    </ligand>
</feature>
<feature type="binding site" evidence="8 11">
    <location>
        <position position="374"/>
    </location>
    <ligand>
        <name>UDP-alpha-D-glucose</name>
        <dbReference type="ChEBI" id="CHEBI:58885"/>
    </ligand>
</feature>
<feature type="binding site" evidence="8 11">
    <location>
        <position position="375"/>
    </location>
    <ligand>
        <name>UDP-alpha-D-glucose</name>
        <dbReference type="ChEBI" id="CHEBI:58885"/>
    </ligand>
</feature>
<feature type="sequence variant" description="In strain: cv. Pinot noir.">
    <original>Q</original>
    <variation>Z</variation>
    <location>
        <position position="47"/>
    </location>
</feature>
<feature type="sequence variant" description="In strain: cv. Italia, cv. Pinot noir and cv. Ruby Okuyama.">
    <original>I</original>
    <variation>V</variation>
    <location>
        <position position="69"/>
    </location>
</feature>
<feature type="sequence variant" description="In strain: cv. Pinot noir / PN40024.">
    <original>P</original>
    <variation>A</variation>
    <location>
        <position position="74"/>
    </location>
</feature>
<feature type="sequence variant" description="In strain: cv. Flame Muscat, cv. Italia, cv. Muscat of Alexandria, cv. Pinot noir, cv. Pinot noir /PN40024, cv. Red Globe and cv. Ruby Okuyama.">
    <original>T</original>
    <variation>M</variation>
    <location>
        <position position="91"/>
    </location>
</feature>
<feature type="sequence variant" description="In strain: cv. Flame Muscat, cv. Italia, cv. Muscat of Alexandria, cv. Pinot noir, cv. Pinot noir /PN40024, cv. Red Globe and cv. Ruby Okuyama." evidence="5">
    <original>L</original>
    <variation>V</variation>
    <location>
        <position position="134"/>
    </location>
</feature>
<feature type="sequence variant" description="In strain: cv. Flame Muscat, cv. Italia, cv. Muscat of Alexandria, cv. Pinot noir / PN40024, cv. Red Globe and cv. Ruby Okuyama.">
    <original>I</original>
    <variation>T</variation>
    <location>
        <position position="153"/>
    </location>
</feature>
<feature type="sequence variant" description="In cv. Red Globe.">
    <original>G</original>
    <variation>A</variation>
    <location>
        <position position="161"/>
    </location>
</feature>
<feature type="sequence variant" description="In strain: cv. Pinot noir / PN40024.">
    <original>S</original>
    <variation>SG</variation>
    <location>
        <position position="163"/>
    </location>
</feature>
<feature type="sequence variant" description="In strain: cv. Italia, cv. Pinot noir /PN40024 and cv. Ruby Okuyama.">
    <original>V</original>
    <variation>I</variation>
    <location>
        <position position="255"/>
    </location>
</feature>
<feature type="sequence variant" description="In strain: cv. Flame Muscat, cv. Italia, cv. Muscat of Alexandria, cv. Pinot noir, cv. Pinot noir /PN40024, cv. Red Globe and cv. Ruby Okuyama.">
    <original>V</original>
    <variation>L</variation>
    <location>
        <position position="289"/>
    </location>
</feature>
<feature type="sequence variant" description="In strain: cv. Flame Muscat, cv. Italia, cv. Muscat of Alexandria, cv. Pinot noir, cv. Pinot noir /PN40024, cv. Red Globe and cv. Ruby Okuyama.">
    <original>S</original>
    <variation>A</variation>
    <location>
        <position position="293"/>
    </location>
</feature>
<feature type="sequence variant" description="In strain: cv. Flame Muscat, cv. Lambrusco Foglia Frastagliata and cv. Muscat of Alexandria.">
    <original>R</original>
    <variation>S</variation>
    <location>
        <position position="312"/>
    </location>
</feature>
<feature type="sequence variant" description="In cv. Red Globe.">
    <original>Y</original>
    <variation>H</variation>
    <location>
        <position position="326"/>
    </location>
</feature>
<feature type="sequence variant" description="In strain: cv. Pinot noir / PN40024.">
    <original>F</original>
    <variation>Y</variation>
    <location>
        <position position="372"/>
    </location>
</feature>
<feature type="sequence variant" description="In strain: cv. Flame Muscat, cv. Italia, cv. Muscat of Alexandria, cv. Pinot noir, cv. Pinot noir /PN40024, cv. Red Globe and cv. Ruby Okuyama.">
    <original>V</original>
    <variation>A</variation>
    <location>
        <position position="385"/>
    </location>
</feature>
<feature type="sequence variant" description="In strain: cv. Flame Muscat and cv. Muscat of Alexandria.">
    <original>KS</original>
    <variation>EN</variation>
    <location>
        <begin position="399"/>
        <end position="400"/>
    </location>
</feature>
<feature type="sequence variant" description="In strain: cv. Flame Muscat, cv. Italia, cv. Muscat of Alexandria, cv. Pinot noir, cv. Pinot noir /PN40024 and cv. Ruby Okuyama.">
    <original>K</original>
    <variation>E</variation>
    <location>
        <position position="399"/>
    </location>
</feature>
<feature type="sequence variant" description="In strain: cv. Pinot noir / PN40024.">
    <original>R</original>
    <variation>G</variation>
    <location>
        <position position="423"/>
    </location>
</feature>
<feature type="sequence variant" description="In strain: cv. Flame Muscat, cv. Italia, cv. Lambrusco Foglia Frastagliata, cv. Muscat of Alexandria, cv. Pinot noir, cv. Pinot noir / PN40024, cv. Red Globe and cv. Ruby Okuyama.">
    <original>I</original>
    <variation>K</variation>
    <location>
        <position position="444"/>
    </location>
</feature>
<feature type="mutagenesis site" description="Loss of catalytic activity." evidence="2">
    <original>H</original>
    <variation>A</variation>
    <location>
        <position position="20"/>
    </location>
</feature>
<feature type="mutagenesis site" description="6-fold decrease in catalytic efficiency." evidence="2">
    <original>T</original>
    <variation>A</variation>
    <location>
        <position position="141"/>
    </location>
</feature>
<feature type="mutagenesis site" description="Loss of catalytic activity." evidence="2">
    <original>D</original>
    <variation>A</variation>
    <location>
        <position position="374"/>
    </location>
</feature>
<feature type="mutagenesis site" description="Loss of catalytic activity." evidence="2">
    <original>Q</original>
    <variation>H</variation>
    <location>
        <position position="375"/>
    </location>
</feature>
<feature type="mutagenesis site" description="Impaired catalytic activity." evidence="2">
    <original>Q</original>
    <variation>N</variation>
    <location>
        <position position="375"/>
    </location>
</feature>
<feature type="strand" evidence="13">
    <location>
        <begin position="9"/>
        <end position="13"/>
    </location>
</feature>
<feature type="strand" evidence="13">
    <location>
        <begin position="17"/>
        <end position="20"/>
    </location>
</feature>
<feature type="helix" evidence="13">
    <location>
        <begin position="21"/>
        <end position="34"/>
    </location>
</feature>
<feature type="strand" evidence="13">
    <location>
        <begin position="38"/>
        <end position="44"/>
    </location>
</feature>
<feature type="helix" evidence="13">
    <location>
        <begin position="46"/>
        <end position="52"/>
    </location>
</feature>
<feature type="strand" evidence="13">
    <location>
        <begin position="64"/>
        <end position="68"/>
    </location>
</feature>
<feature type="helix" evidence="13">
    <location>
        <begin position="85"/>
        <end position="109"/>
    </location>
</feature>
<feature type="strand" evidence="13">
    <location>
        <begin position="115"/>
        <end position="119"/>
    </location>
</feature>
<feature type="helix" evidence="13">
    <location>
        <begin position="125"/>
        <end position="132"/>
    </location>
</feature>
<feature type="strand" evidence="13">
    <location>
        <begin position="135"/>
        <end position="140"/>
    </location>
</feature>
<feature type="helix" evidence="13">
    <location>
        <begin position="144"/>
        <end position="151"/>
    </location>
</feature>
<feature type="helix" evidence="13">
    <location>
        <begin position="153"/>
        <end position="160"/>
    </location>
</feature>
<feature type="helix" evidence="13">
    <location>
        <begin position="184"/>
        <end position="186"/>
    </location>
</feature>
<feature type="strand" evidence="13">
    <location>
        <begin position="191"/>
        <end position="194"/>
    </location>
</feature>
<feature type="helix" evidence="13">
    <location>
        <begin position="199"/>
        <end position="210"/>
    </location>
</feature>
<feature type="helix" evidence="13">
    <location>
        <begin position="211"/>
        <end position="213"/>
    </location>
</feature>
<feature type="strand" evidence="13">
    <location>
        <begin position="217"/>
        <end position="221"/>
    </location>
</feature>
<feature type="helix" evidence="13">
    <location>
        <begin position="223"/>
        <end position="225"/>
    </location>
</feature>
<feature type="helix" evidence="13">
    <location>
        <begin position="227"/>
        <end position="236"/>
    </location>
</feature>
<feature type="strand" evidence="13">
    <location>
        <begin position="240"/>
        <end position="242"/>
    </location>
</feature>
<feature type="helix" evidence="13">
    <location>
        <begin position="246"/>
        <end position="249"/>
    </location>
</feature>
<feature type="helix" evidence="13">
    <location>
        <begin position="261"/>
        <end position="266"/>
    </location>
</feature>
<feature type="strand" evidence="13">
    <location>
        <begin position="273"/>
        <end position="277"/>
    </location>
</feature>
<feature type="helix" evidence="13">
    <location>
        <begin position="286"/>
        <end position="299"/>
    </location>
</feature>
<feature type="strand" evidence="13">
    <location>
        <begin position="303"/>
        <end position="306"/>
    </location>
</feature>
<feature type="helix" evidence="13">
    <location>
        <begin position="309"/>
        <end position="314"/>
    </location>
</feature>
<feature type="helix" evidence="13">
    <location>
        <begin position="319"/>
        <end position="323"/>
    </location>
</feature>
<feature type="turn" evidence="13">
    <location>
        <begin position="324"/>
        <end position="326"/>
    </location>
</feature>
<feature type="strand" evidence="13">
    <location>
        <begin position="327"/>
        <end position="331"/>
    </location>
</feature>
<feature type="helix" evidence="13">
    <location>
        <begin position="335"/>
        <end position="339"/>
    </location>
</feature>
<feature type="strand" evidence="13">
    <location>
        <begin position="344"/>
        <end position="349"/>
    </location>
</feature>
<feature type="helix" evidence="13">
    <location>
        <begin position="353"/>
        <end position="362"/>
    </location>
</feature>
<feature type="strand" evidence="13">
    <location>
        <begin position="366"/>
        <end position="368"/>
    </location>
</feature>
<feature type="helix" evidence="13">
    <location>
        <begin position="375"/>
        <end position="384"/>
    </location>
</feature>
<feature type="strand" evidence="13">
    <location>
        <begin position="389"/>
        <end position="391"/>
    </location>
</feature>
<feature type="helix" evidence="13">
    <location>
        <begin position="393"/>
        <end position="395"/>
    </location>
</feature>
<feature type="helix" evidence="13">
    <location>
        <begin position="399"/>
        <end position="411"/>
    </location>
</feature>
<feature type="helix" evidence="13">
    <location>
        <begin position="413"/>
        <end position="432"/>
    </location>
</feature>
<feature type="helix" evidence="13">
    <location>
        <begin position="438"/>
        <end position="450"/>
    </location>
</feature>
<name>UFOG_VITVI</name>